<organism>
    <name type="scientific">Xenopus laevis</name>
    <name type="common">African clawed frog</name>
    <dbReference type="NCBI Taxonomy" id="8355"/>
    <lineage>
        <taxon>Eukaryota</taxon>
        <taxon>Metazoa</taxon>
        <taxon>Chordata</taxon>
        <taxon>Craniata</taxon>
        <taxon>Vertebrata</taxon>
        <taxon>Euteleostomi</taxon>
        <taxon>Amphibia</taxon>
        <taxon>Batrachia</taxon>
        <taxon>Anura</taxon>
        <taxon>Pipoidea</taxon>
        <taxon>Pipidae</taxon>
        <taxon>Xenopodinae</taxon>
        <taxon>Xenopus</taxon>
        <taxon>Xenopus</taxon>
    </lineage>
</organism>
<comment type="function">
    <text evidence="2">Growth factor of the TGF-beta superfamily that plays important role in various biological processes, including embryogenesis, hematopoiesis, neurogenesis and skeletal morphogenesis. Initiates the canonical BMP signaling cascade by associating with type I receptor ACVR1 and type II receptor ACVR2A. Once all three components are bound together in a complex at the cell surface, ACVR2A phosphorylates and activates ACVR1. In turn, ACVR1 propagates signal by phosphorylating SMAD1/5/8 that travel to the nucleus and act as activators and repressors of transcription of target genes.</text>
</comment>
<comment type="subunit">
    <text evidence="2 4">Homodimer; disulfide-linked (By similarity). Interacts with twsg1.</text>
</comment>
<comment type="subcellular location">
    <subcellularLocation>
        <location evidence="1">Secreted</location>
    </subcellularLocation>
</comment>
<comment type="similarity">
    <text evidence="5">Belongs to the TGF-beta family.</text>
</comment>
<feature type="signal peptide" evidence="3">
    <location>
        <begin position="1"/>
        <end position="22"/>
    </location>
</feature>
<feature type="propeptide" id="PRO_0000033880" evidence="1">
    <location>
        <begin position="23"/>
        <end position="282"/>
    </location>
</feature>
<feature type="chain" id="PRO_0000033881" description="Bone morphogenetic protein 7">
    <location>
        <begin position="283"/>
        <end position="426"/>
    </location>
</feature>
<feature type="glycosylation site" description="N-linked (GlcNAc...) asparagine" evidence="3">
    <location>
        <position position="177"/>
    </location>
</feature>
<feature type="glycosylation site" description="N-linked (GlcNAc...) asparagine" evidence="3">
    <location>
        <position position="307"/>
    </location>
</feature>
<feature type="glycosylation site" description="N-linked (GlcNAc...) asparagine" evidence="3">
    <location>
        <position position="367"/>
    </location>
</feature>
<feature type="disulfide bond" evidence="1">
    <location>
        <begin position="325"/>
        <end position="391"/>
    </location>
</feature>
<feature type="disulfide bond" evidence="1">
    <location>
        <begin position="354"/>
        <end position="423"/>
    </location>
</feature>
<feature type="disulfide bond" evidence="1">
    <location>
        <begin position="358"/>
        <end position="425"/>
    </location>
</feature>
<feature type="disulfide bond" description="Interchain" evidence="1">
    <location>
        <position position="390"/>
    </location>
</feature>
<feature type="sequence conflict" description="In Ref. 2; AAA82616." evidence="5" ref="2">
    <original>KRR</original>
    <variation>NVV</variation>
    <location>
        <begin position="317"/>
        <end position="319"/>
    </location>
</feature>
<feature type="sequence conflict" description="In Ref. 2; AAA82616." evidence="5" ref="2">
    <original>D</original>
    <variation>E</variation>
    <location>
        <position position="355"/>
    </location>
</feature>
<evidence type="ECO:0000250" key="1"/>
<evidence type="ECO:0000250" key="2">
    <source>
        <dbReference type="UniProtKB" id="P18075"/>
    </source>
</evidence>
<evidence type="ECO:0000255" key="3"/>
<evidence type="ECO:0000269" key="4">
    <source>
    </source>
</evidence>
<evidence type="ECO:0000305" key="5"/>
<keyword id="KW-0891">Chondrogenesis</keyword>
<keyword id="KW-0202">Cytokine</keyword>
<keyword id="KW-0217">Developmental protein</keyword>
<keyword id="KW-0221">Differentiation</keyword>
<keyword id="KW-1015">Disulfide bond</keyword>
<keyword id="KW-0325">Glycoprotein</keyword>
<keyword id="KW-0339">Growth factor</keyword>
<keyword id="KW-0892">Osteogenesis</keyword>
<keyword id="KW-1185">Reference proteome</keyword>
<keyword id="KW-0964">Secreted</keyword>
<keyword id="KW-0732">Signal</keyword>
<protein>
    <recommendedName>
        <fullName>Bone morphogenetic protein 7</fullName>
        <shortName>BMP-7</shortName>
        <shortName>xBMP7</shortName>
    </recommendedName>
    <alternativeName>
        <fullName>Osteogenic protein 1</fullName>
        <shortName>OP-1</shortName>
    </alternativeName>
</protein>
<gene>
    <name type="primary">bmp7</name>
</gene>
<sequence>MNALTVKRRLPVLLFLFHISLSSISSNTILENDFHSSFVQRRLKGHERREIQKEILTILGLQHRPRPYLPEKKKSAPLFMMDLYNAVNIEEMHAEDVSYSNKPISLNEAFSLATDQENGFLAHADTVMSFANLVDNDNELHKNSYRQKFKFDLTDIPLGDELTAAEFRIYKDYVQNNETYQVTIYQVLKKQADKDPYLFQVDSRTIWGTEKGWLTFDITATGNHWVMNPHYNLGLQLSVESMDMQNVNPRLVGLVGKNGPQDKQPFMVAFFKTSDIHLRSVRSTSNKHWNQERAKTYKEQDNLPPANITDGIMPPGKRRFLKQACKKHELFVSFRDLGWQDWIIAPEGYAAYYCDGECAFPLNSFMNATNHAIVQTLVHFINPETVPKPCCAPTQLNGISVLYFDDSANVILKKYKNMVVQACGCH</sequence>
<accession>P30886</accession>
<accession>Q91645</accession>
<proteinExistence type="evidence at protein level"/>
<reference key="1">
    <citation type="journal article" date="1992" name="Biochem. Biophys. Res. Commun.">
        <title>Genes for bone morphogenetic proteins are differentially transcribed in early amphibian embryos.</title>
        <authorList>
            <person name="Nishimatsu S."/>
            <person name="Suzuki A."/>
            <person name="Shoda A."/>
            <person name="Murakami K."/>
            <person name="Ueno N."/>
        </authorList>
    </citation>
    <scope>NUCLEOTIDE SEQUENCE [MRNA]</scope>
</reference>
<reference key="2">
    <citation type="submission" date="1995-12" db="EMBL/GenBank/DDBJ databases">
        <authorList>
            <person name="Hawley S.H.B."/>
            <person name="Wunnenberg-Stapleton K."/>
            <person name="Hashimoto C."/>
            <person name="Laurent M.N."/>
            <person name="Watabe T."/>
            <person name="Blumberg B.W."/>
            <person name="Cho K.W.Y."/>
        </authorList>
    </citation>
    <scope>NUCLEOTIDE SEQUENCE [MRNA]</scope>
</reference>
<reference key="3">
    <citation type="journal article" date="2005" name="Development">
        <title>Sirenomelia in Bmp7 and Tsg compound mutant mice: requirement for Bmp signaling in the development of ventral posterior mesoderm.</title>
        <authorList>
            <person name="Zakin L."/>
            <person name="Reversade B."/>
            <person name="Kuroda H."/>
            <person name="Lyons K.M."/>
            <person name="De Robertis E.M."/>
        </authorList>
    </citation>
    <scope>INTERACTION WITH TWSG1</scope>
</reference>
<name>BMP7_XENLA</name>
<dbReference type="EMBL" id="X63427">
    <property type="protein sequence ID" value="CAA45021.1"/>
    <property type="molecule type" value="mRNA"/>
</dbReference>
<dbReference type="EMBL" id="U38559">
    <property type="protein sequence ID" value="AAA82616.1"/>
    <property type="molecule type" value="mRNA"/>
</dbReference>
<dbReference type="PIR" id="JH0690">
    <property type="entry name" value="JH0690"/>
</dbReference>
<dbReference type="RefSeq" id="NP_001079934.1">
    <property type="nucleotide sequence ID" value="NM_001086465.1"/>
</dbReference>
<dbReference type="RefSeq" id="XP_018106162.1">
    <property type="nucleotide sequence ID" value="XM_018250673.1"/>
</dbReference>
<dbReference type="SMR" id="P30886"/>
<dbReference type="GlyCosmos" id="P30886">
    <property type="glycosylation" value="3 sites, No reported glycans"/>
</dbReference>
<dbReference type="DNASU" id="379625"/>
<dbReference type="GeneID" id="379625"/>
<dbReference type="KEGG" id="xla:379625"/>
<dbReference type="AGR" id="Xenbase:XB-GENE-856288"/>
<dbReference type="CTD" id="379625"/>
<dbReference type="Xenbase" id="XB-GENE-856288">
    <property type="gene designation" value="bmp7.2.L"/>
</dbReference>
<dbReference type="OMA" id="IGEHYEN"/>
<dbReference type="OrthoDB" id="5987191at2759"/>
<dbReference type="Proteomes" id="UP000186698">
    <property type="component" value="Chromosome 3L"/>
</dbReference>
<dbReference type="Bgee" id="379625">
    <property type="expression patterns" value="Expressed in gastrula and 6 other cell types or tissues"/>
</dbReference>
<dbReference type="GO" id="GO:0005615">
    <property type="term" value="C:extracellular space"/>
    <property type="evidence" value="ECO:0000318"/>
    <property type="project" value="GO_Central"/>
</dbReference>
<dbReference type="GO" id="GO:0005125">
    <property type="term" value="F:cytokine activity"/>
    <property type="evidence" value="ECO:0000318"/>
    <property type="project" value="GO_Central"/>
</dbReference>
<dbReference type="GO" id="GO:0008083">
    <property type="term" value="F:growth factor activity"/>
    <property type="evidence" value="ECO:0007669"/>
    <property type="project" value="UniProtKB-KW"/>
</dbReference>
<dbReference type="GO" id="GO:0030509">
    <property type="term" value="P:BMP signaling pathway"/>
    <property type="evidence" value="ECO:0000318"/>
    <property type="project" value="GO_Central"/>
</dbReference>
<dbReference type="GO" id="GO:0051216">
    <property type="term" value="P:cartilage development"/>
    <property type="evidence" value="ECO:0007669"/>
    <property type="project" value="UniProtKB-KW"/>
</dbReference>
<dbReference type="GO" id="GO:0030154">
    <property type="term" value="P:cell differentiation"/>
    <property type="evidence" value="ECO:0007669"/>
    <property type="project" value="UniProtKB-KW"/>
</dbReference>
<dbReference type="GO" id="GO:0001503">
    <property type="term" value="P:ossification"/>
    <property type="evidence" value="ECO:0007669"/>
    <property type="project" value="UniProtKB-KW"/>
</dbReference>
<dbReference type="CDD" id="cd19397">
    <property type="entry name" value="TGF_beta_BMP7"/>
    <property type="match status" value="1"/>
</dbReference>
<dbReference type="FunFam" id="2.10.90.10:FF:000003">
    <property type="entry name" value="Bone morphogenetic protein 5"/>
    <property type="match status" value="1"/>
</dbReference>
<dbReference type="Gene3D" id="2.60.120.970">
    <property type="match status" value="1"/>
</dbReference>
<dbReference type="Gene3D" id="2.10.90.10">
    <property type="entry name" value="Cystine-knot cytokines"/>
    <property type="match status" value="1"/>
</dbReference>
<dbReference type="InterPro" id="IPR029034">
    <property type="entry name" value="Cystine-knot_cytokine"/>
</dbReference>
<dbReference type="InterPro" id="IPR001839">
    <property type="entry name" value="TGF-b_C"/>
</dbReference>
<dbReference type="InterPro" id="IPR001111">
    <property type="entry name" value="TGF-b_propeptide"/>
</dbReference>
<dbReference type="InterPro" id="IPR015615">
    <property type="entry name" value="TGF-beta-rel"/>
</dbReference>
<dbReference type="InterPro" id="IPR017948">
    <property type="entry name" value="TGFb_CS"/>
</dbReference>
<dbReference type="PANTHER" id="PTHR11848:SF291">
    <property type="entry name" value="BONE MORPHOGENETIC PROTEIN 7"/>
    <property type="match status" value="1"/>
</dbReference>
<dbReference type="PANTHER" id="PTHR11848">
    <property type="entry name" value="TGF-BETA FAMILY"/>
    <property type="match status" value="1"/>
</dbReference>
<dbReference type="Pfam" id="PF00019">
    <property type="entry name" value="TGF_beta"/>
    <property type="match status" value="1"/>
</dbReference>
<dbReference type="Pfam" id="PF00688">
    <property type="entry name" value="TGFb_propeptide"/>
    <property type="match status" value="1"/>
</dbReference>
<dbReference type="SMART" id="SM00204">
    <property type="entry name" value="TGFB"/>
    <property type="match status" value="1"/>
</dbReference>
<dbReference type="SUPFAM" id="SSF57501">
    <property type="entry name" value="Cystine-knot cytokines"/>
    <property type="match status" value="1"/>
</dbReference>
<dbReference type="PROSITE" id="PS00250">
    <property type="entry name" value="TGF_BETA_1"/>
    <property type="match status" value="1"/>
</dbReference>
<dbReference type="PROSITE" id="PS51362">
    <property type="entry name" value="TGF_BETA_2"/>
    <property type="match status" value="1"/>
</dbReference>